<name>RHLB_SHIDS</name>
<reference key="1">
    <citation type="journal article" date="2005" name="Nucleic Acids Res.">
        <title>Genome dynamics and diversity of Shigella species, the etiologic agents of bacillary dysentery.</title>
        <authorList>
            <person name="Yang F."/>
            <person name="Yang J."/>
            <person name="Zhang X."/>
            <person name="Chen L."/>
            <person name="Jiang Y."/>
            <person name="Yan Y."/>
            <person name="Tang X."/>
            <person name="Wang J."/>
            <person name="Xiong Z."/>
            <person name="Dong J."/>
            <person name="Xue Y."/>
            <person name="Zhu Y."/>
            <person name="Xu X."/>
            <person name="Sun L."/>
            <person name="Chen S."/>
            <person name="Nie H."/>
            <person name="Peng J."/>
            <person name="Xu J."/>
            <person name="Wang Y."/>
            <person name="Yuan Z."/>
            <person name="Wen Y."/>
            <person name="Yao Z."/>
            <person name="Shen Y."/>
            <person name="Qiang B."/>
            <person name="Hou Y."/>
            <person name="Yu J."/>
            <person name="Jin Q."/>
        </authorList>
    </citation>
    <scope>NUCLEOTIDE SEQUENCE [LARGE SCALE GENOMIC DNA]</scope>
    <source>
        <strain>Sd197</strain>
    </source>
</reference>
<feature type="chain" id="PRO_1000082872" description="ATP-dependent RNA helicase RhlB">
    <location>
        <begin position="1"/>
        <end position="421"/>
    </location>
</feature>
<feature type="domain" description="Helicase ATP-binding" evidence="1">
    <location>
        <begin position="40"/>
        <end position="219"/>
    </location>
</feature>
<feature type="domain" description="Helicase C-terminal" evidence="1">
    <location>
        <begin position="245"/>
        <end position="390"/>
    </location>
</feature>
<feature type="region of interest" description="Disordered" evidence="2">
    <location>
        <begin position="392"/>
        <end position="421"/>
    </location>
</feature>
<feature type="short sequence motif" description="Q motif">
    <location>
        <begin position="9"/>
        <end position="37"/>
    </location>
</feature>
<feature type="short sequence motif" description="DEAD box">
    <location>
        <begin position="165"/>
        <end position="168"/>
    </location>
</feature>
<feature type="compositionally biased region" description="Low complexity" evidence="2">
    <location>
        <begin position="402"/>
        <end position="414"/>
    </location>
</feature>
<feature type="binding site" evidence="1">
    <location>
        <begin position="53"/>
        <end position="60"/>
    </location>
    <ligand>
        <name>ATP</name>
        <dbReference type="ChEBI" id="CHEBI:30616"/>
    </ligand>
</feature>
<keyword id="KW-0067">ATP-binding</keyword>
<keyword id="KW-0963">Cytoplasm</keyword>
<keyword id="KW-0347">Helicase</keyword>
<keyword id="KW-0378">Hydrolase</keyword>
<keyword id="KW-0547">Nucleotide-binding</keyword>
<keyword id="KW-1185">Reference proteome</keyword>
<keyword id="KW-0694">RNA-binding</keyword>
<organism>
    <name type="scientific">Shigella dysenteriae serotype 1 (strain Sd197)</name>
    <dbReference type="NCBI Taxonomy" id="300267"/>
    <lineage>
        <taxon>Bacteria</taxon>
        <taxon>Pseudomonadati</taxon>
        <taxon>Pseudomonadota</taxon>
        <taxon>Gammaproteobacteria</taxon>
        <taxon>Enterobacterales</taxon>
        <taxon>Enterobacteriaceae</taxon>
        <taxon>Shigella</taxon>
    </lineage>
</organism>
<gene>
    <name evidence="1" type="primary">rhlB</name>
    <name type="ordered locus">SDY_3969</name>
</gene>
<protein>
    <recommendedName>
        <fullName evidence="1">ATP-dependent RNA helicase RhlB</fullName>
        <ecNumber evidence="1">3.6.4.13</ecNumber>
    </recommendedName>
</protein>
<evidence type="ECO:0000255" key="1">
    <source>
        <dbReference type="HAMAP-Rule" id="MF_00661"/>
    </source>
</evidence>
<evidence type="ECO:0000256" key="2">
    <source>
        <dbReference type="SAM" id="MobiDB-lite"/>
    </source>
</evidence>
<accession>Q329V8</accession>
<dbReference type="EC" id="3.6.4.13" evidence="1"/>
<dbReference type="EMBL" id="CP000034">
    <property type="protein sequence ID" value="ABB63897.1"/>
    <property type="molecule type" value="Genomic_DNA"/>
</dbReference>
<dbReference type="RefSeq" id="WP_000047532.1">
    <property type="nucleotide sequence ID" value="NC_007606.1"/>
</dbReference>
<dbReference type="RefSeq" id="YP_405388.1">
    <property type="nucleotide sequence ID" value="NC_007606.1"/>
</dbReference>
<dbReference type="SMR" id="Q329V8"/>
<dbReference type="STRING" id="300267.SDY_3969"/>
<dbReference type="EnsemblBacteria" id="ABB63897">
    <property type="protein sequence ID" value="ABB63897"/>
    <property type="gene ID" value="SDY_3969"/>
</dbReference>
<dbReference type="KEGG" id="sdy:SDY_3969"/>
<dbReference type="PATRIC" id="fig|300267.13.peg.4680"/>
<dbReference type="HOGENOM" id="CLU_003041_1_3_6"/>
<dbReference type="Proteomes" id="UP000002716">
    <property type="component" value="Chromosome"/>
</dbReference>
<dbReference type="GO" id="GO:0005829">
    <property type="term" value="C:cytosol"/>
    <property type="evidence" value="ECO:0007669"/>
    <property type="project" value="TreeGrafter"/>
</dbReference>
<dbReference type="GO" id="GO:0005524">
    <property type="term" value="F:ATP binding"/>
    <property type="evidence" value="ECO:0007669"/>
    <property type="project" value="UniProtKB-UniRule"/>
</dbReference>
<dbReference type="GO" id="GO:0016887">
    <property type="term" value="F:ATP hydrolysis activity"/>
    <property type="evidence" value="ECO:0007669"/>
    <property type="project" value="RHEA"/>
</dbReference>
<dbReference type="GO" id="GO:0003723">
    <property type="term" value="F:RNA binding"/>
    <property type="evidence" value="ECO:0007669"/>
    <property type="project" value="UniProtKB-UniRule"/>
</dbReference>
<dbReference type="GO" id="GO:0003724">
    <property type="term" value="F:RNA helicase activity"/>
    <property type="evidence" value="ECO:0007669"/>
    <property type="project" value="UniProtKB-UniRule"/>
</dbReference>
<dbReference type="GO" id="GO:0006401">
    <property type="term" value="P:RNA catabolic process"/>
    <property type="evidence" value="ECO:0007669"/>
    <property type="project" value="UniProtKB-UniRule"/>
</dbReference>
<dbReference type="CDD" id="cd00268">
    <property type="entry name" value="DEADc"/>
    <property type="match status" value="1"/>
</dbReference>
<dbReference type="CDD" id="cd18787">
    <property type="entry name" value="SF2_C_DEAD"/>
    <property type="match status" value="1"/>
</dbReference>
<dbReference type="FunFam" id="3.40.50.300:FF:000008">
    <property type="entry name" value="ATP-dependent RNA helicase RhlB"/>
    <property type="match status" value="1"/>
</dbReference>
<dbReference type="FunFam" id="3.40.50.300:FF:000312">
    <property type="entry name" value="ATP-dependent RNA helicase RhlB"/>
    <property type="match status" value="1"/>
</dbReference>
<dbReference type="Gene3D" id="3.40.50.300">
    <property type="entry name" value="P-loop containing nucleotide triphosphate hydrolases"/>
    <property type="match status" value="2"/>
</dbReference>
<dbReference type="HAMAP" id="MF_00661">
    <property type="entry name" value="DEAD_helicase_RhlB"/>
    <property type="match status" value="1"/>
</dbReference>
<dbReference type="InterPro" id="IPR011545">
    <property type="entry name" value="DEAD/DEAH_box_helicase_dom"/>
</dbReference>
<dbReference type="InterPro" id="IPR050079">
    <property type="entry name" value="DEAD_box_RNA_helicase"/>
</dbReference>
<dbReference type="InterPro" id="IPR014001">
    <property type="entry name" value="Helicase_ATP-bd"/>
</dbReference>
<dbReference type="InterPro" id="IPR001650">
    <property type="entry name" value="Helicase_C-like"/>
</dbReference>
<dbReference type="InterPro" id="IPR027417">
    <property type="entry name" value="P-loop_NTPase"/>
</dbReference>
<dbReference type="InterPro" id="IPR000629">
    <property type="entry name" value="RNA-helicase_DEAD-box_CS"/>
</dbReference>
<dbReference type="InterPro" id="IPR023554">
    <property type="entry name" value="RNA_helicase_ATP-dep_RhlB"/>
</dbReference>
<dbReference type="InterPro" id="IPR014014">
    <property type="entry name" value="RNA_helicase_DEAD_Q_motif"/>
</dbReference>
<dbReference type="NCBIfam" id="NF003419">
    <property type="entry name" value="PRK04837.1"/>
    <property type="match status" value="1"/>
</dbReference>
<dbReference type="PANTHER" id="PTHR47959:SF10">
    <property type="entry name" value="ATP-DEPENDENT RNA HELICASE RHLB"/>
    <property type="match status" value="1"/>
</dbReference>
<dbReference type="PANTHER" id="PTHR47959">
    <property type="entry name" value="ATP-DEPENDENT RNA HELICASE RHLE-RELATED"/>
    <property type="match status" value="1"/>
</dbReference>
<dbReference type="Pfam" id="PF00270">
    <property type="entry name" value="DEAD"/>
    <property type="match status" value="1"/>
</dbReference>
<dbReference type="Pfam" id="PF00271">
    <property type="entry name" value="Helicase_C"/>
    <property type="match status" value="1"/>
</dbReference>
<dbReference type="SMART" id="SM00487">
    <property type="entry name" value="DEXDc"/>
    <property type="match status" value="1"/>
</dbReference>
<dbReference type="SMART" id="SM00490">
    <property type="entry name" value="HELICc"/>
    <property type="match status" value="1"/>
</dbReference>
<dbReference type="SUPFAM" id="SSF52540">
    <property type="entry name" value="P-loop containing nucleoside triphosphate hydrolases"/>
    <property type="match status" value="1"/>
</dbReference>
<dbReference type="PROSITE" id="PS00039">
    <property type="entry name" value="DEAD_ATP_HELICASE"/>
    <property type="match status" value="1"/>
</dbReference>
<dbReference type="PROSITE" id="PS51192">
    <property type="entry name" value="HELICASE_ATP_BIND_1"/>
    <property type="match status" value="1"/>
</dbReference>
<dbReference type="PROSITE" id="PS51194">
    <property type="entry name" value="HELICASE_CTER"/>
    <property type="match status" value="1"/>
</dbReference>
<dbReference type="PROSITE" id="PS51195">
    <property type="entry name" value="Q_MOTIF"/>
    <property type="match status" value="1"/>
</dbReference>
<sequence length="421" mass="47172">MSKTHLTEQKFSDFSLHPKVVEALEKKGFHNCTPIQALALPLTLAGRDVAGQAQTGTGKTMAFLTSMFHYLLSHPAIADRKVNKPRALIMAPTRELAVQIHADAEPLAEATGLKLGLAYGGDGYDKQLKVLESGVDILIGTTGRLIDYAKQNHINLGAIQVVVLDEADRMYDLGFIKDIRWLFRRMPPANQRLNMLFSATLSYRVRELAFEQMNNAEYIEVEPEQKTGHRIKEELFYPSNEEKMRLLQTLIEEEWPDRAIIFANTKHRCEEIWGHLAADGHRVGLLTGDVAQKKRLRILDEFTRGDLDILVATDVAARGLHIPAVTHVFNYDLPDDCEDYVHRIGRTGRAGASGHSISLACEEYALNLPAIETYIGHSIPVSKYNPDALMTDLPKPLRLTRPRTGNGPRRTGAPRNRRRSG</sequence>
<proteinExistence type="inferred from homology"/>
<comment type="function">
    <text evidence="1">DEAD-box RNA helicase involved in RNA degradation. Has RNA-dependent ATPase activity and unwinds double-stranded RNA.</text>
</comment>
<comment type="catalytic activity">
    <reaction evidence="1">
        <text>ATP + H2O = ADP + phosphate + H(+)</text>
        <dbReference type="Rhea" id="RHEA:13065"/>
        <dbReference type="ChEBI" id="CHEBI:15377"/>
        <dbReference type="ChEBI" id="CHEBI:15378"/>
        <dbReference type="ChEBI" id="CHEBI:30616"/>
        <dbReference type="ChEBI" id="CHEBI:43474"/>
        <dbReference type="ChEBI" id="CHEBI:456216"/>
        <dbReference type="EC" id="3.6.4.13"/>
    </reaction>
</comment>
<comment type="subunit">
    <text evidence="1">Component of the RNA degradosome, which is a multiprotein complex involved in RNA processing and mRNA degradation.</text>
</comment>
<comment type="subcellular location">
    <subcellularLocation>
        <location evidence="1">Cytoplasm</location>
    </subcellularLocation>
</comment>
<comment type="similarity">
    <text evidence="1">Belongs to the DEAD box helicase family. RhlB subfamily.</text>
</comment>